<dbReference type="EC" id="3.4.14.-"/>
<dbReference type="EMBL" id="AJ430626">
    <property type="protein sequence ID" value="CAD23374.1"/>
    <property type="molecule type" value="Genomic_DNA"/>
</dbReference>
<dbReference type="SMR" id="Q8J1L4"/>
<dbReference type="ESTHER" id="artbe-DPP5">
    <property type="family name" value="Prolyl_oligopeptidase_S9"/>
</dbReference>
<dbReference type="MEROPS" id="S09.012"/>
<dbReference type="GlyCosmos" id="Q8J1L4">
    <property type="glycosylation" value="5 sites, No reported glycans"/>
</dbReference>
<dbReference type="GO" id="GO:0005576">
    <property type="term" value="C:extracellular region"/>
    <property type="evidence" value="ECO:0007669"/>
    <property type="project" value="UniProtKB-SubCell"/>
</dbReference>
<dbReference type="GO" id="GO:0004252">
    <property type="term" value="F:serine-type endopeptidase activity"/>
    <property type="evidence" value="ECO:0007669"/>
    <property type="project" value="TreeGrafter"/>
</dbReference>
<dbReference type="GO" id="GO:0006508">
    <property type="term" value="P:proteolysis"/>
    <property type="evidence" value="ECO:0007669"/>
    <property type="project" value="UniProtKB-KW"/>
</dbReference>
<dbReference type="FunFam" id="3.40.50.1820:FF:000028">
    <property type="entry name" value="S9 family peptidase"/>
    <property type="match status" value="1"/>
</dbReference>
<dbReference type="Gene3D" id="3.40.50.1820">
    <property type="entry name" value="alpha/beta hydrolase"/>
    <property type="match status" value="1"/>
</dbReference>
<dbReference type="Gene3D" id="2.120.10.30">
    <property type="entry name" value="TolB, C-terminal domain"/>
    <property type="match status" value="1"/>
</dbReference>
<dbReference type="InterPro" id="IPR011042">
    <property type="entry name" value="6-blade_b-propeller_TolB-like"/>
</dbReference>
<dbReference type="InterPro" id="IPR029058">
    <property type="entry name" value="AB_hydrolase_fold"/>
</dbReference>
<dbReference type="InterPro" id="IPR011659">
    <property type="entry name" value="PD40"/>
</dbReference>
<dbReference type="InterPro" id="IPR001375">
    <property type="entry name" value="Peptidase_S9_cat"/>
</dbReference>
<dbReference type="PANTHER" id="PTHR42776:SF11">
    <property type="entry name" value="DIPEPTIDYL-PEPTIDASE 5-RELATED"/>
    <property type="match status" value="1"/>
</dbReference>
<dbReference type="PANTHER" id="PTHR42776">
    <property type="entry name" value="SERINE PEPTIDASE S9 FAMILY MEMBER"/>
    <property type="match status" value="1"/>
</dbReference>
<dbReference type="Pfam" id="PF07676">
    <property type="entry name" value="PD40"/>
    <property type="match status" value="1"/>
</dbReference>
<dbReference type="Pfam" id="PF00326">
    <property type="entry name" value="Peptidase_S9"/>
    <property type="match status" value="1"/>
</dbReference>
<dbReference type="SUPFAM" id="SSF53474">
    <property type="entry name" value="alpha/beta-Hydrolases"/>
    <property type="match status" value="1"/>
</dbReference>
<dbReference type="SUPFAM" id="SSF69322">
    <property type="entry name" value="Tricorn protease domain 2"/>
    <property type="match status" value="1"/>
</dbReference>
<organism>
    <name type="scientific">Trichophyton schoenleinii</name>
    <dbReference type="NCBI Taxonomy" id="34386"/>
    <lineage>
        <taxon>Eukaryota</taxon>
        <taxon>Fungi</taxon>
        <taxon>Dikarya</taxon>
        <taxon>Ascomycota</taxon>
        <taxon>Pezizomycotina</taxon>
        <taxon>Eurotiomycetes</taxon>
        <taxon>Eurotiomycetidae</taxon>
        <taxon>Onygenales</taxon>
        <taxon>Arthrodermataceae</taxon>
        <taxon>Trichophyton</taxon>
    </lineage>
</organism>
<comment type="subcellular location">
    <subcellularLocation>
        <location evidence="1">Secreted</location>
    </subcellularLocation>
</comment>
<comment type="allergen">
    <text>Causes an allergic reaction in human.</text>
</comment>
<comment type="similarity">
    <text evidence="4">Belongs to the peptidase S9C family.</text>
</comment>
<reference key="1">
    <citation type="submission" date="2002-02" db="EMBL/GenBank/DDBJ databases">
        <title>Development of DNA markers to explore the genetic relatedness of strains of the two dermatophyte species causing Favus of human and mouse.</title>
        <authorList>
            <person name="Probst S."/>
            <person name="Polyakov I."/>
            <person name="Ivanova L."/>
            <person name="Graeser Y."/>
        </authorList>
    </citation>
    <scope>NUCLEOTIDE SEQUENCE [GENOMIC DNA]</scope>
    <source>
        <strain>VKPGF 235/25</strain>
    </source>
</reference>
<keyword id="KW-0020">Allergen</keyword>
<keyword id="KW-0325">Glycoprotein</keyword>
<keyword id="KW-0378">Hydrolase</keyword>
<keyword id="KW-0645">Protease</keyword>
<keyword id="KW-0964">Secreted</keyword>
<keyword id="KW-0720">Serine protease</keyword>
<keyword id="KW-0732">Signal</keyword>
<protein>
    <recommendedName>
        <fullName>Dipeptidyl-peptidase 5</fullName>
        <ecNumber>3.4.14.-</ecNumber>
    </recommendedName>
    <alternativeName>
        <fullName>Dipeptidyl-peptidase V</fullName>
        <shortName>DPP V</shortName>
        <shortName>DppV</shortName>
    </alternativeName>
    <allergenName>Tri s 4</allergenName>
</protein>
<gene>
    <name type="primary">DPPV</name>
</gene>
<accession>Q8J1L4</accession>
<evidence type="ECO:0000250" key="1"/>
<evidence type="ECO:0000255" key="2"/>
<evidence type="ECO:0000256" key="3">
    <source>
        <dbReference type="SAM" id="MobiDB-lite"/>
    </source>
</evidence>
<evidence type="ECO:0000305" key="4"/>
<name>DPP5_TRISH</name>
<proteinExistence type="evidence at protein level"/>
<sequence length="726" mass="79997">MAAAKWLIASLAFASSGLAFTPEDFISAPRRGEAIPDPKGELAVFHVSKYNFDKKDRPSGWNLLNLKNGDISVLTTDSDVSEITWLGDGTKVVYVNGTDSVEGGVGIWISDAKNFGNAYKAGSVNGAFSGLKLAKAGDKINFVGYGQSTTKGDLYNEAAAKEAVSSARIYDGLFVRHWDTYVGTQFNAVFSGSLTKNGDKYSFDGKLKNLVQPVKYAESPYPPFGGSGDYDLSSDGKTVAFMSKAPELPKANLTTSYIFLVPHDGSRVAEPINKRNGPRTPQGIEGASSSPVFSPDGKRIAYLQMATKNYESDRRVIHIAEVGSNKPVQRIASSWDRSPEAVKWSSDGRTLYVTAEDHATGKLFTLPADARDNHKPSVVKHDGSVSSFYFIGSSKSVLISGNSLWSNALYQVATPGRPNRKLFYANEHDPELKGLGPKDIEPLWVDGARTKIHSWIVKPTGFDKNKVYPLAFLIHGGPQGSWGDSWSTRWNPRVWADQGYVVVAPNPTGSTGFGQKLTDDITNDWGGAPYKDLVKIWEHVRDHIKYIDTDNGIAAGASFGGFMVNWIQGQDLGRKFKALVSHDGTFVGSSKIGTDELFFIEHDFNGTFFEARQNYDRWDCSKPELVAKWSTPQLVIHNDSDFRLSVAEGVGLFNVLQEKGIPSRFLNFPDETHWVTKPENSLVWHQQVLGWINKWSGINKSNPKSIKLSDCPIEVIDHEAHSYFDY</sequence>
<feature type="signal peptide" evidence="2">
    <location>
        <begin position="1"/>
        <end position="19"/>
    </location>
</feature>
<feature type="chain" id="PRO_0000027226" description="Dipeptidyl-peptidase 5">
    <location>
        <begin position="20"/>
        <end position="726"/>
    </location>
</feature>
<feature type="region of interest" description="Disordered" evidence="3">
    <location>
        <begin position="269"/>
        <end position="291"/>
    </location>
</feature>
<feature type="active site" description="Charge relay system" evidence="1">
    <location>
        <position position="558"/>
    </location>
</feature>
<feature type="active site" description="Charge relay system" evidence="1">
    <location>
        <position position="641"/>
    </location>
</feature>
<feature type="active site" description="Charge relay system" evidence="1">
    <location>
        <position position="673"/>
    </location>
</feature>
<feature type="glycosylation site" description="N-linked (GlcNAc...) asparagine" evidence="2">
    <location>
        <position position="96"/>
    </location>
</feature>
<feature type="glycosylation site" description="N-linked (GlcNAc...) asparagine" evidence="2">
    <location>
        <position position="252"/>
    </location>
</feature>
<feature type="glycosylation site" description="N-linked (GlcNAc...) asparagine" evidence="2">
    <location>
        <position position="605"/>
    </location>
</feature>
<feature type="glycosylation site" description="N-linked (GlcNAc...) asparagine" evidence="2">
    <location>
        <position position="638"/>
    </location>
</feature>
<feature type="glycosylation site" description="N-linked (GlcNAc...) asparagine" evidence="2">
    <location>
        <position position="699"/>
    </location>
</feature>